<evidence type="ECO:0000250" key="1"/>
<evidence type="ECO:0000305" key="2"/>
<dbReference type="EC" id="2.3.1.122"/>
<dbReference type="EC" id="2.3.1.20"/>
<dbReference type="EMBL" id="D26486">
    <property type="protein sequence ID" value="BAA05496.1"/>
    <property type="molecule type" value="Genomic_DNA"/>
</dbReference>
<dbReference type="EMBL" id="LT708304">
    <property type="protein sequence ID" value="SIU02463.1"/>
    <property type="molecule type" value="Genomic_DNA"/>
</dbReference>
<dbReference type="RefSeq" id="NP_857471.1">
    <property type="nucleotide sequence ID" value="NC_002945.3"/>
</dbReference>
<dbReference type="RefSeq" id="WP_003900759.1">
    <property type="nucleotide sequence ID" value="NC_002945.4"/>
</dbReference>
<dbReference type="SMR" id="P0C2T1"/>
<dbReference type="ESTHER" id="myctu-a85a">
    <property type="family name" value="A85-Mycolyl-transferase"/>
</dbReference>
<dbReference type="GeneID" id="45427805"/>
<dbReference type="KEGG" id="mbo:BQ2027_MB3834C"/>
<dbReference type="PATRIC" id="fig|233413.5.peg.4192"/>
<dbReference type="Proteomes" id="UP000001419">
    <property type="component" value="Chromosome"/>
</dbReference>
<dbReference type="GO" id="GO:0005737">
    <property type="term" value="C:cytoplasm"/>
    <property type="evidence" value="ECO:0007669"/>
    <property type="project" value="UniProtKB-SubCell"/>
</dbReference>
<dbReference type="GO" id="GO:0005576">
    <property type="term" value="C:extracellular region"/>
    <property type="evidence" value="ECO:0007669"/>
    <property type="project" value="UniProtKB-KW"/>
</dbReference>
<dbReference type="GO" id="GO:0004144">
    <property type="term" value="F:diacylglycerol O-acyltransferase activity"/>
    <property type="evidence" value="ECO:0007669"/>
    <property type="project" value="UniProtKB-EC"/>
</dbReference>
<dbReference type="GO" id="GO:0050348">
    <property type="term" value="F:trehalose O-mycolyltransferase activity"/>
    <property type="evidence" value="ECO:0007669"/>
    <property type="project" value="UniProtKB-EC"/>
</dbReference>
<dbReference type="FunFam" id="3.40.50.1820:FF:000086">
    <property type="entry name" value="Diacylglycerol acyltransferase/mycolyltransferase Ag85C"/>
    <property type="match status" value="1"/>
</dbReference>
<dbReference type="Gene3D" id="3.40.50.1820">
    <property type="entry name" value="alpha/beta hydrolase"/>
    <property type="match status" value="1"/>
</dbReference>
<dbReference type="InterPro" id="IPR029058">
    <property type="entry name" value="AB_hydrolase_fold"/>
</dbReference>
<dbReference type="InterPro" id="IPR000801">
    <property type="entry name" value="Esterase-like"/>
</dbReference>
<dbReference type="InterPro" id="IPR050583">
    <property type="entry name" value="Mycobacterial_A85_antigen"/>
</dbReference>
<dbReference type="InterPro" id="IPR006311">
    <property type="entry name" value="TAT_signal"/>
</dbReference>
<dbReference type="PANTHER" id="PTHR48098:SF1">
    <property type="entry name" value="DIACYLGLYCEROL ACYLTRANSFERASE_MYCOLYLTRANSFERASE AG85A"/>
    <property type="match status" value="1"/>
</dbReference>
<dbReference type="PANTHER" id="PTHR48098">
    <property type="entry name" value="ENTEROCHELIN ESTERASE-RELATED"/>
    <property type="match status" value="1"/>
</dbReference>
<dbReference type="Pfam" id="PF00756">
    <property type="entry name" value="Esterase"/>
    <property type="match status" value="1"/>
</dbReference>
<dbReference type="SUPFAM" id="SSF53474">
    <property type="entry name" value="alpha/beta-Hydrolases"/>
    <property type="match status" value="1"/>
</dbReference>
<accession>P0C2T1</accession>
<accession>A0A1R3Y5B5</accession>
<accession>P0A4V3</accession>
<accession>P17944</accession>
<accession>P17996</accession>
<accession>X2BQ28</accession>
<keyword id="KW-0012">Acyltransferase</keyword>
<keyword id="KW-0134">Cell wall</keyword>
<keyword id="KW-0963">Cytoplasm</keyword>
<keyword id="KW-1015">Disulfide bond</keyword>
<keyword id="KW-1185">Reference proteome</keyword>
<keyword id="KW-0964">Secreted</keyword>
<keyword id="KW-0732">Signal</keyword>
<keyword id="KW-0808">Transferase</keyword>
<reference key="1">
    <citation type="journal article" date="1995" name="Scand. J. Immunol.">
        <title>Characterization of the gene encoding the MPB51, one of the major secreted protein antigens of Mycobacterium bovis BCG, and identification of the secreted protein closely related to the fibronectin binding 85 complex.</title>
        <authorList>
            <person name="Ohara N."/>
            <person name="Kitaura H."/>
            <person name="Hotokezaka H."/>
            <person name="Nishiyama T."/>
            <person name="Wada N."/>
            <person name="Matsumoto S."/>
            <person name="Matsuo T."/>
            <person name="Naito M."/>
            <person name="Yamada T."/>
        </authorList>
    </citation>
    <scope>NUCLEOTIDE SEQUENCE [GENOMIC DNA]</scope>
    <source>
        <strain>BCG / Tokyo</strain>
    </source>
</reference>
<reference key="2">
    <citation type="journal article" date="2003" name="Proc. Natl. Acad. Sci. U.S.A.">
        <title>The complete genome sequence of Mycobacterium bovis.</title>
        <authorList>
            <person name="Garnier T."/>
            <person name="Eiglmeier K."/>
            <person name="Camus J.-C."/>
            <person name="Medina N."/>
            <person name="Mansoor H."/>
            <person name="Pryor M."/>
            <person name="Duthoy S."/>
            <person name="Grondin S."/>
            <person name="Lacroix C."/>
            <person name="Monsempe C."/>
            <person name="Simon S."/>
            <person name="Harris B."/>
            <person name="Atkin R."/>
            <person name="Doggett J."/>
            <person name="Mayes R."/>
            <person name="Keating L."/>
            <person name="Wheeler P.R."/>
            <person name="Parkhill J."/>
            <person name="Barrell B.G."/>
            <person name="Cole S.T."/>
            <person name="Gordon S.V."/>
            <person name="Hewinson R.G."/>
        </authorList>
    </citation>
    <scope>NUCLEOTIDE SEQUENCE [LARGE SCALE GENOMIC DNA]</scope>
    <source>
        <strain>ATCC BAA-935 / AF2122/97</strain>
    </source>
</reference>
<reference key="3">
    <citation type="journal article" date="2017" name="Genome Announc.">
        <title>Updated reference genome sequence and annotation of Mycobacterium bovis AF2122/97.</title>
        <authorList>
            <person name="Malone K.M."/>
            <person name="Farrell D."/>
            <person name="Stuber T.P."/>
            <person name="Schubert O.T."/>
            <person name="Aebersold R."/>
            <person name="Robbe-Austerman S."/>
            <person name="Gordon S.V."/>
        </authorList>
    </citation>
    <scope>NUCLEOTIDE SEQUENCE [LARGE SCALE GENOMIC DNA]</scope>
    <scope>GENOME REANNOTATION</scope>
    <source>
        <strain>ATCC BAA-935 / AF2122/97</strain>
    </source>
</reference>
<gene>
    <name type="primary">fbpA</name>
    <name type="synonym">mpt44</name>
    <name type="ordered locus">BQ2027_MB3834C</name>
</gene>
<feature type="signal peptide" evidence="1">
    <location>
        <begin position="1"/>
        <end position="42"/>
    </location>
</feature>
<feature type="chain" id="PRO_0000000211" description="Diacylglycerol acyltransferase/mycolyltransferase Ag85A">
    <location>
        <begin position="43"/>
        <end position="338"/>
    </location>
</feature>
<feature type="region of interest" description="Fibronectin-binding">
    <location>
        <begin position="101"/>
        <end position="111"/>
    </location>
</feature>
<feature type="active site" description="Nucleophile" evidence="1">
    <location>
        <position position="169"/>
    </location>
</feature>
<feature type="active site" evidence="1">
    <location>
        <position position="273"/>
    </location>
</feature>
<feature type="active site" evidence="1">
    <location>
        <position position="305"/>
    </location>
</feature>
<feature type="binding site" evidence="1">
    <location>
        <begin position="85"/>
        <end position="86"/>
    </location>
    <ligand>
        <name>substrate</name>
    </ligand>
</feature>
<feature type="binding site" evidence="1">
    <location>
        <position position="169"/>
    </location>
    <ligand>
        <name>substrate</name>
    </ligand>
</feature>
<feature type="binding site" evidence="1">
    <location>
        <position position="197"/>
    </location>
    <ligand>
        <name>substrate</name>
    </ligand>
</feature>
<feature type="binding site" evidence="1">
    <location>
        <begin position="275"/>
        <end position="278"/>
    </location>
    <ligand>
        <name>substrate</name>
    </ligand>
</feature>
<feature type="binding site" evidence="1">
    <location>
        <position position="282"/>
    </location>
    <ligand>
        <name>substrate</name>
    </ligand>
</feature>
<feature type="binding site" evidence="1">
    <location>
        <begin position="305"/>
        <end position="307"/>
    </location>
    <ligand>
        <name>substrate</name>
    </ligand>
</feature>
<feature type="disulfide bond" evidence="1">
    <location>
        <begin position="130"/>
        <end position="135"/>
    </location>
</feature>
<name>A85A_MYCBO</name>
<organism>
    <name type="scientific">Mycobacterium bovis (strain ATCC BAA-935 / AF2122/97)</name>
    <dbReference type="NCBI Taxonomy" id="233413"/>
    <lineage>
        <taxon>Bacteria</taxon>
        <taxon>Bacillati</taxon>
        <taxon>Actinomycetota</taxon>
        <taxon>Actinomycetes</taxon>
        <taxon>Mycobacteriales</taxon>
        <taxon>Mycobacteriaceae</taxon>
        <taxon>Mycobacterium</taxon>
        <taxon>Mycobacterium tuberculosis complex</taxon>
    </lineage>
</organism>
<proteinExistence type="inferred from homology"/>
<comment type="function">
    <text evidence="1">The antigen 85 proteins (FbpA, FbpB, FbpC) are responsible for the high affinity of mycobacteria for fibronectin, a large adhesive glycoprotein, which facilitates the attachment of M.tuberculosis to murine alveolar macrophages (AMs). They also help to maintain the integrity of the cell wall by catalyzing the transfer of mycolic acids to cell wall arabinogalactan, and through the synthesis of alpha,alpha-trehalose dimycolate (TDM, cord factor). They catalyze the transfer of a mycoloyl residue from one molecule of alpha,alpha-trehalose monomycolate (TMM) to another TMM, leading to the formation of TDM. FbpA mediates triacylglycerol (TAG) formation with long-chain acyl-CoA as the acyl donor and 1,2-dipalmitoyl-sn-glycerol (1,2-dipalmitin) as the acyl acceptor. It has a preference for C26:0-CoA over C18:1-CoA (By similarity).</text>
</comment>
<comment type="catalytic activity">
    <reaction>
        <text>an acyl-CoA + a 1,2-diacyl-sn-glycerol = a triacyl-sn-glycerol + CoA</text>
        <dbReference type="Rhea" id="RHEA:10868"/>
        <dbReference type="ChEBI" id="CHEBI:17815"/>
        <dbReference type="ChEBI" id="CHEBI:57287"/>
        <dbReference type="ChEBI" id="CHEBI:58342"/>
        <dbReference type="ChEBI" id="CHEBI:64615"/>
        <dbReference type="EC" id="2.3.1.20"/>
    </reaction>
</comment>
<comment type="catalytic activity">
    <reaction>
        <text>2 alpha,alpha'-trehalose 6-mycolate = alpha,alpha'-trehalose 6,6'-bismycolate + alpha,alpha-trehalose</text>
        <dbReference type="Rhea" id="RHEA:23472"/>
        <dbReference type="ChEBI" id="CHEBI:16551"/>
        <dbReference type="ChEBI" id="CHEBI:18195"/>
        <dbReference type="ChEBI" id="CHEBI:18234"/>
        <dbReference type="EC" id="2.3.1.122"/>
    </reaction>
</comment>
<comment type="subunit">
    <text evidence="1">Homodimer.</text>
</comment>
<comment type="subcellular location">
    <subcellularLocation>
        <location>Secreted</location>
        <location>Cell wall</location>
    </subcellularLocation>
    <subcellularLocation>
        <location>Cytoplasm</location>
    </subcellularLocation>
</comment>
<comment type="similarity">
    <text evidence="2">Belongs to the mycobacterial A85 antigen family.</text>
</comment>
<sequence length="338" mass="35686">MQLVDRVRGAVTGMSRRLVVGAVGAALVSGLVGAVGGTATAGAFSRPGLPVEYLQVPSPSMGRDIKVQFQSGGANSPALYLLDGLRAQDDFSGWDINTPAFEWYDQSGLSVVMPVGGQSSFYSDWYQPACGKAGCQTYKWETFLTSELPGWLQANRHVKPTGSAVVGLSMAASSALTLAIYHPQQFVYAGAMSGLLDPSQAMGPTLIGLAMGDAGGYKASDMWGPKEDPAWQRNDPLLNVGKLIANNTRVWVYCGNGKPSDLGGNNLPAKFLEGFVRTSNIKFQDAYNAGGGHNGVFDFPDSGTHSWEYWGAQLNAMKPDLQRALGATPNTGPAPQGA</sequence>
<protein>
    <recommendedName>
        <fullName>Diacylglycerol acyltransferase/mycolyltransferase Ag85A</fullName>
        <shortName>DGAT</shortName>
        <ecNumber>2.3.1.122</ecNumber>
        <ecNumber>2.3.1.20</ecNumber>
    </recommendedName>
    <alternativeName>
        <fullName>Acyl-CoA:diacylglycerol acyltransferase</fullName>
    </alternativeName>
    <alternativeName>
        <fullName>Antigen 85 complex A</fullName>
        <shortName>85A</shortName>
        <shortName>Ag85A</shortName>
    </alternativeName>
    <alternativeName>
        <fullName>Fibronectin-binding protein A</fullName>
        <shortName>Fbps A</shortName>
    </alternativeName>
</protein>